<reference key="1">
    <citation type="submission" date="2006-12" db="EMBL/GenBank/DDBJ databases">
        <title>Complete sequence of Mycobacterium vanbaalenii PYR-1.</title>
        <authorList>
            <consortium name="US DOE Joint Genome Institute"/>
            <person name="Copeland A."/>
            <person name="Lucas S."/>
            <person name="Lapidus A."/>
            <person name="Barry K."/>
            <person name="Detter J.C."/>
            <person name="Glavina del Rio T."/>
            <person name="Hammon N."/>
            <person name="Israni S."/>
            <person name="Dalin E."/>
            <person name="Tice H."/>
            <person name="Pitluck S."/>
            <person name="Singan V."/>
            <person name="Schmutz J."/>
            <person name="Larimer F."/>
            <person name="Land M."/>
            <person name="Hauser L."/>
            <person name="Kyrpides N."/>
            <person name="Anderson I.J."/>
            <person name="Miller C."/>
            <person name="Richardson P."/>
        </authorList>
    </citation>
    <scope>NUCLEOTIDE SEQUENCE [LARGE SCALE GENOMIC DNA]</scope>
    <source>
        <strain>DSM 7251 / JCM 13017 / BCRC 16820 / KCTC 9966 / NRRL B-24157 / PYR-1</strain>
    </source>
</reference>
<comment type="function">
    <text evidence="1">Catalyzes the ATP-dependent phosphorylation of maltose to maltose 1-phosphate. Is involved in a branched alpha-glucan biosynthetic pathway from trehalose, together with TreS, GlgE and GlgB (By similarity).</text>
</comment>
<comment type="catalytic activity">
    <reaction>
        <text>D-maltose + ATP = alpha-maltose 1-phosphate + ADP + H(+)</text>
        <dbReference type="Rhea" id="RHEA:31915"/>
        <dbReference type="ChEBI" id="CHEBI:15378"/>
        <dbReference type="ChEBI" id="CHEBI:17306"/>
        <dbReference type="ChEBI" id="CHEBI:30616"/>
        <dbReference type="ChEBI" id="CHEBI:63576"/>
        <dbReference type="ChEBI" id="CHEBI:456216"/>
        <dbReference type="EC" id="2.7.1.175"/>
    </reaction>
</comment>
<comment type="pathway">
    <text>Glycan biosynthesis; glycogen biosynthesis.</text>
</comment>
<comment type="subunit">
    <text evidence="1">Monomer.</text>
</comment>
<comment type="similarity">
    <text evidence="2">Belongs to the aminoglycoside phosphotransferase family.</text>
</comment>
<name>MAK_MYCVP</name>
<keyword id="KW-0002">3D-structure</keyword>
<keyword id="KW-0067">ATP-binding</keyword>
<keyword id="KW-0119">Carbohydrate metabolism</keyword>
<keyword id="KW-0320">Glycogen biosynthesis</keyword>
<keyword id="KW-0321">Glycogen metabolism</keyword>
<keyword id="KW-0418">Kinase</keyword>
<keyword id="KW-0547">Nucleotide-binding</keyword>
<keyword id="KW-0808">Transferase</keyword>
<dbReference type="EC" id="2.7.1.175"/>
<dbReference type="EMBL" id="CP000511">
    <property type="protein sequence ID" value="ABM16500.1"/>
    <property type="molecule type" value="Genomic_DNA"/>
</dbReference>
<dbReference type="RefSeq" id="WP_011782852.1">
    <property type="nucleotide sequence ID" value="NZ_JACKSD010000205.1"/>
</dbReference>
<dbReference type="PDB" id="4U94">
    <property type="method" value="X-ray"/>
    <property type="resolution" value="1.47 A"/>
    <property type="chains" value="A=1-441"/>
</dbReference>
<dbReference type="PDB" id="4U98">
    <property type="method" value="X-ray"/>
    <property type="resolution" value="1.15 A"/>
    <property type="chains" value="A=1-441"/>
</dbReference>
<dbReference type="PDB" id="4WZY">
    <property type="method" value="X-ray"/>
    <property type="resolution" value="1.71 A"/>
    <property type="chains" value="A=1-441"/>
</dbReference>
<dbReference type="PDBsum" id="4U94"/>
<dbReference type="PDBsum" id="4U98"/>
<dbReference type="PDBsum" id="4WZY"/>
<dbReference type="SMR" id="A1TH50"/>
<dbReference type="STRING" id="350058.Mvan_5735"/>
<dbReference type="KEGG" id="mva:Mvan_5735"/>
<dbReference type="eggNOG" id="COG3281">
    <property type="taxonomic scope" value="Bacteria"/>
</dbReference>
<dbReference type="HOGENOM" id="CLU_029675_0_0_11"/>
<dbReference type="BRENDA" id="2.7.1.175">
    <property type="organism ID" value="7846"/>
</dbReference>
<dbReference type="UniPathway" id="UPA00164"/>
<dbReference type="EvolutionaryTrace" id="A1TH50"/>
<dbReference type="Proteomes" id="UP000009159">
    <property type="component" value="Chromosome"/>
</dbReference>
<dbReference type="GO" id="GO:0005524">
    <property type="term" value="F:ATP binding"/>
    <property type="evidence" value="ECO:0007669"/>
    <property type="project" value="UniProtKB-KW"/>
</dbReference>
<dbReference type="GO" id="GO:0016301">
    <property type="term" value="F:kinase activity"/>
    <property type="evidence" value="ECO:0007669"/>
    <property type="project" value="UniProtKB-KW"/>
</dbReference>
<dbReference type="GO" id="GO:0046835">
    <property type="term" value="P:carbohydrate phosphorylation"/>
    <property type="evidence" value="ECO:0000250"/>
    <property type="project" value="UniProtKB"/>
</dbReference>
<dbReference type="GO" id="GO:0005978">
    <property type="term" value="P:glycogen biosynthetic process"/>
    <property type="evidence" value="ECO:0007669"/>
    <property type="project" value="UniProtKB-UniPathway"/>
</dbReference>
<dbReference type="GO" id="GO:0005992">
    <property type="term" value="P:trehalose biosynthetic process"/>
    <property type="evidence" value="ECO:0000250"/>
    <property type="project" value="UniProtKB"/>
</dbReference>
<dbReference type="Gene3D" id="3.90.1200.10">
    <property type="match status" value="1"/>
</dbReference>
<dbReference type="InterPro" id="IPR011009">
    <property type="entry name" value="Kinase-like_dom_sf"/>
</dbReference>
<dbReference type="InterPro" id="IPR040999">
    <property type="entry name" value="Mak_N_cap"/>
</dbReference>
<dbReference type="Pfam" id="PF18085">
    <property type="entry name" value="Mak_N_cap"/>
    <property type="match status" value="1"/>
</dbReference>
<dbReference type="SUPFAM" id="SSF56112">
    <property type="entry name" value="Protein kinase-like (PK-like)"/>
    <property type="match status" value="1"/>
</dbReference>
<organism>
    <name type="scientific">Mycolicibacterium vanbaalenii (strain DSM 7251 / JCM 13017 / BCRC 16820 / KCTC 9966 / NRRL B-24157 / PYR-1)</name>
    <name type="common">Mycobacterium vanbaalenii</name>
    <dbReference type="NCBI Taxonomy" id="350058"/>
    <lineage>
        <taxon>Bacteria</taxon>
        <taxon>Bacillati</taxon>
        <taxon>Actinomycetota</taxon>
        <taxon>Actinomycetes</taxon>
        <taxon>Mycobacteriales</taxon>
        <taxon>Mycobacteriaceae</taxon>
        <taxon>Mycolicibacterium</taxon>
    </lineage>
</organism>
<proteinExistence type="evidence at protein level"/>
<gene>
    <name type="primary">mak</name>
    <name type="ordered locus">Mvan_5735</name>
</gene>
<sequence>MTLAFGDWIVHRRWYAGRSRELVSAEPAVVTPLRDDLDHILLDVTYTDGTVERYQLVVRWADSPVAGFGEAATIGTALGPQGERIAYDALFDPDAARHLLRLVDASATVADLRFTREPGATLPLYAPPKVSSAEQSNTSVIFGKDAMLKVFRRVTPGINPDIELNRVLAQAGNRHVARLLGSFETSWAGPGTDRCALGMVTAFAANSAEGWDMATASAREMFADVVGSDFADESYRLGNAVASVHATLAEALGTSTEPFPVDTVLARLQSAARSAPELAGRAAAVEERYRRLDGRAITVQRVHGDLHLGQVLRTPDDWLLIDFEGEPGQPLDERRRPDSPLRDVAGVLRSFEYAAYQKLVELAPEQDADGRLADRARNWVDRNSAAFCAGYAAVAGDDPRRDGDVLAAYELDKAVYEAAYEARFRPSWLPIPMRSIDRILG</sequence>
<accession>A1TH50</accession>
<protein>
    <recommendedName>
        <fullName>Maltokinase</fullName>
        <shortName>MaK</shortName>
        <ecNumber>2.7.1.175</ecNumber>
    </recommendedName>
    <alternativeName>
        <fullName>Maltose-1-phosphate synthase</fullName>
    </alternativeName>
</protein>
<feature type="chain" id="PRO_0000412900" description="Maltokinase">
    <location>
        <begin position="1"/>
        <end position="441"/>
    </location>
</feature>
<feature type="helix" evidence="3">
    <location>
        <begin position="5"/>
        <end position="9"/>
    </location>
</feature>
<feature type="strand" evidence="3">
    <location>
        <begin position="22"/>
        <end position="34"/>
    </location>
</feature>
<feature type="strand" evidence="3">
    <location>
        <begin position="37"/>
        <end position="46"/>
    </location>
</feature>
<feature type="strand" evidence="3">
    <location>
        <begin position="51"/>
        <end position="63"/>
    </location>
</feature>
<feature type="helix" evidence="3">
    <location>
        <begin position="70"/>
        <end position="72"/>
    </location>
</feature>
<feature type="strand" evidence="3">
    <location>
        <begin position="73"/>
        <end position="79"/>
    </location>
</feature>
<feature type="strand" evidence="3">
    <location>
        <begin position="82"/>
        <end position="88"/>
    </location>
</feature>
<feature type="helix" evidence="3">
    <location>
        <begin position="89"/>
        <end position="91"/>
    </location>
</feature>
<feature type="helix" evidence="3">
    <location>
        <begin position="93"/>
        <end position="104"/>
    </location>
</feature>
<feature type="strand" evidence="3">
    <location>
        <begin position="112"/>
        <end position="116"/>
    </location>
</feature>
<feature type="strand" evidence="3">
    <location>
        <begin position="128"/>
        <end position="130"/>
    </location>
</feature>
<feature type="strand" evidence="3">
    <location>
        <begin position="136"/>
        <end position="142"/>
    </location>
</feature>
<feature type="turn" evidence="3">
    <location>
        <begin position="143"/>
        <end position="145"/>
    </location>
</feature>
<feature type="strand" evidence="3">
    <location>
        <begin position="146"/>
        <end position="150"/>
    </location>
</feature>
<feature type="strand" evidence="3">
    <location>
        <begin position="152"/>
        <end position="154"/>
    </location>
</feature>
<feature type="helix" evidence="3">
    <location>
        <begin position="160"/>
        <end position="170"/>
    </location>
</feature>
<feature type="strand" evidence="3">
    <location>
        <begin position="174"/>
        <end position="176"/>
    </location>
</feature>
<feature type="strand" evidence="3">
    <location>
        <begin position="179"/>
        <end position="189"/>
    </location>
</feature>
<feature type="strand" evidence="3">
    <location>
        <begin position="194"/>
        <end position="202"/>
    </location>
</feature>
<feature type="helix" evidence="3">
    <location>
        <begin position="210"/>
        <end position="219"/>
    </location>
</feature>
<feature type="helix" evidence="3">
    <location>
        <begin position="229"/>
        <end position="252"/>
    </location>
</feature>
<feature type="strand" evidence="3">
    <location>
        <begin position="254"/>
        <end position="258"/>
    </location>
</feature>
<feature type="helix" evidence="3">
    <location>
        <begin position="261"/>
        <end position="274"/>
    </location>
</feature>
<feature type="helix" evidence="3">
    <location>
        <begin position="276"/>
        <end position="278"/>
    </location>
</feature>
<feature type="helix" evidence="3">
    <location>
        <begin position="279"/>
        <end position="290"/>
    </location>
</feature>
<feature type="turn" evidence="3">
    <location>
        <begin position="291"/>
        <end position="294"/>
    </location>
</feature>
<feature type="strand" evidence="3">
    <location>
        <begin position="296"/>
        <end position="300"/>
    </location>
</feature>
<feature type="helix" evidence="3">
    <location>
        <begin position="308"/>
        <end position="310"/>
    </location>
</feature>
<feature type="strand" evidence="3">
    <location>
        <begin position="311"/>
        <end position="313"/>
    </location>
</feature>
<feature type="strand" evidence="3">
    <location>
        <begin position="318"/>
        <end position="320"/>
    </location>
</feature>
<feature type="helix" evidence="3">
    <location>
        <begin position="331"/>
        <end position="334"/>
    </location>
</feature>
<feature type="helix" evidence="3">
    <location>
        <begin position="340"/>
        <end position="361"/>
    </location>
</feature>
<feature type="helix" evidence="3">
    <location>
        <begin position="364"/>
        <end position="367"/>
    </location>
</feature>
<feature type="helix" evidence="3">
    <location>
        <begin position="371"/>
        <end position="395"/>
    </location>
</feature>
<feature type="turn" evidence="3">
    <location>
        <begin position="399"/>
        <end position="402"/>
    </location>
</feature>
<feature type="helix" evidence="3">
    <location>
        <begin position="403"/>
        <end position="424"/>
    </location>
</feature>
<feature type="helix" evidence="3">
    <location>
        <begin position="426"/>
        <end position="428"/>
    </location>
</feature>
<feature type="helix" evidence="3">
    <location>
        <begin position="430"/>
        <end position="441"/>
    </location>
</feature>
<evidence type="ECO:0000250" key="1"/>
<evidence type="ECO:0000305" key="2"/>
<evidence type="ECO:0007829" key="3">
    <source>
        <dbReference type="PDB" id="4U98"/>
    </source>
</evidence>